<reference key="1">
    <citation type="journal article" date="2005" name="Nat. Biotechnol.">
        <title>Complete genome sequence of the plant commensal Pseudomonas fluorescens Pf-5.</title>
        <authorList>
            <person name="Paulsen I.T."/>
            <person name="Press C.M."/>
            <person name="Ravel J."/>
            <person name="Kobayashi D.Y."/>
            <person name="Myers G.S.A."/>
            <person name="Mavrodi D.V."/>
            <person name="DeBoy R.T."/>
            <person name="Seshadri R."/>
            <person name="Ren Q."/>
            <person name="Madupu R."/>
            <person name="Dodson R.J."/>
            <person name="Durkin A.S."/>
            <person name="Brinkac L.M."/>
            <person name="Daugherty S.C."/>
            <person name="Sullivan S.A."/>
            <person name="Rosovitz M.J."/>
            <person name="Gwinn M.L."/>
            <person name="Zhou L."/>
            <person name="Schneider D.J."/>
            <person name="Cartinhour S.W."/>
            <person name="Nelson W.C."/>
            <person name="Weidman J."/>
            <person name="Watkins K."/>
            <person name="Tran K."/>
            <person name="Khouri H."/>
            <person name="Pierson E.A."/>
            <person name="Pierson L.S. III"/>
            <person name="Thomashow L.S."/>
            <person name="Loper J.E."/>
        </authorList>
    </citation>
    <scope>NUCLEOTIDE SEQUENCE [LARGE SCALE GENOMIC DNA]</scope>
    <source>
        <strain>ATCC BAA-477 / NRRL B-23932 / Pf-5</strain>
    </source>
</reference>
<protein>
    <recommendedName>
        <fullName>Probable periplasmic serine endoprotease DegP-like</fullName>
        <ecNumber>3.4.21.107</ecNumber>
    </recommendedName>
    <alternativeName>
        <fullName>Protease Do</fullName>
    </alternativeName>
</protein>
<evidence type="ECO:0000250" key="1"/>
<evidence type="ECO:0000255" key="2"/>
<evidence type="ECO:0000255" key="3">
    <source>
        <dbReference type="PROSITE-ProRule" id="PRU00143"/>
    </source>
</evidence>
<evidence type="ECO:0000305" key="4"/>
<sequence>MSIPRLKSYFTILATVLVLGQAVSAQAAELPDFTQLVEQASPAVVNISTTQKLPDRRVSNSAQMPDLEGLPPMLREFFERGMPQPRSPRGDRQREAQSLGSGFIISADGYILTNNHVIADADEILVRLADRSELKAKLIGTDPRSDVALLKIDGKDLPVLKLGKSQDLKAGQWVVAIGSPFGFDHTVTQGIVSAIGRSLPNENYVPFIQTDVPINPGNSGGPLFNLAGEVVGINSQIYTRSGGFMGVSFAIPIDVAMDVSNQLKTGGKVSRGWLGVVIQEVNKDLAESFGLEKPAGALVAQIQDDGPAAKGGLQVGDVILSLNGQPIVMSADLPHLVGALKAGAKANLEVIRDGKRKNVELTVGAIPEEDKDLSMLPKSGVERSSNRLGVAVVELNDEQKKAFDLKGGVVIKEVQDGPAALIGLQPGDVITHLNNQAITSAKEFTEIAKALPKNRSVSMRVLRQGRASFITFKLAE</sequence>
<dbReference type="EC" id="3.4.21.107"/>
<dbReference type="EMBL" id="CP000076">
    <property type="protein sequence ID" value="AAY90735.1"/>
    <property type="molecule type" value="Genomic_DNA"/>
</dbReference>
<dbReference type="RefSeq" id="WP_011059790.1">
    <property type="nucleotide sequence ID" value="NC_004129.6"/>
</dbReference>
<dbReference type="SMR" id="Q4KGQ4"/>
<dbReference type="STRING" id="220664.PFL_1451"/>
<dbReference type="MEROPS" id="S01.453"/>
<dbReference type="KEGG" id="pfl:PFL_1451"/>
<dbReference type="PATRIC" id="fig|220664.5.peg.1484"/>
<dbReference type="eggNOG" id="COG0265">
    <property type="taxonomic scope" value="Bacteria"/>
</dbReference>
<dbReference type="HOGENOM" id="CLU_020120_1_0_6"/>
<dbReference type="Proteomes" id="UP000008540">
    <property type="component" value="Chromosome"/>
</dbReference>
<dbReference type="GO" id="GO:0042597">
    <property type="term" value="C:periplasmic space"/>
    <property type="evidence" value="ECO:0007669"/>
    <property type="project" value="UniProtKB-SubCell"/>
</dbReference>
<dbReference type="GO" id="GO:0004252">
    <property type="term" value="F:serine-type endopeptidase activity"/>
    <property type="evidence" value="ECO:0007669"/>
    <property type="project" value="InterPro"/>
</dbReference>
<dbReference type="GO" id="GO:0006508">
    <property type="term" value="P:proteolysis"/>
    <property type="evidence" value="ECO:0007669"/>
    <property type="project" value="UniProtKB-KW"/>
</dbReference>
<dbReference type="CDD" id="cd10839">
    <property type="entry name" value="cpPDZ1_DegP-like"/>
    <property type="match status" value="1"/>
</dbReference>
<dbReference type="FunFam" id="2.30.42.10:FF:000037">
    <property type="entry name" value="Periplasmic serine endoprotease DegP-like"/>
    <property type="match status" value="1"/>
</dbReference>
<dbReference type="FunFam" id="2.40.10.120:FF:000007">
    <property type="entry name" value="Periplasmic serine endoprotease DegP-like"/>
    <property type="match status" value="1"/>
</dbReference>
<dbReference type="Gene3D" id="2.30.42.10">
    <property type="match status" value="2"/>
</dbReference>
<dbReference type="Gene3D" id="2.40.10.120">
    <property type="match status" value="1"/>
</dbReference>
<dbReference type="InterPro" id="IPR001478">
    <property type="entry name" value="PDZ"/>
</dbReference>
<dbReference type="InterPro" id="IPR036034">
    <property type="entry name" value="PDZ_sf"/>
</dbReference>
<dbReference type="InterPro" id="IPR011782">
    <property type="entry name" value="Pept_S1C_Do"/>
</dbReference>
<dbReference type="InterPro" id="IPR009003">
    <property type="entry name" value="Peptidase_S1_PA"/>
</dbReference>
<dbReference type="InterPro" id="IPR001940">
    <property type="entry name" value="Peptidase_S1C"/>
</dbReference>
<dbReference type="NCBIfam" id="TIGR02037">
    <property type="entry name" value="degP_htrA_DO"/>
    <property type="match status" value="1"/>
</dbReference>
<dbReference type="PANTHER" id="PTHR22939">
    <property type="entry name" value="SERINE PROTEASE FAMILY S1C HTRA-RELATED"/>
    <property type="match status" value="1"/>
</dbReference>
<dbReference type="PANTHER" id="PTHR22939:SF129">
    <property type="entry name" value="SERINE PROTEASE HTRA2, MITOCHONDRIAL"/>
    <property type="match status" value="1"/>
</dbReference>
<dbReference type="Pfam" id="PF00595">
    <property type="entry name" value="PDZ"/>
    <property type="match status" value="1"/>
</dbReference>
<dbReference type="Pfam" id="PF13180">
    <property type="entry name" value="PDZ_2"/>
    <property type="match status" value="1"/>
</dbReference>
<dbReference type="Pfam" id="PF13365">
    <property type="entry name" value="Trypsin_2"/>
    <property type="match status" value="1"/>
</dbReference>
<dbReference type="PRINTS" id="PR00834">
    <property type="entry name" value="PROTEASES2C"/>
</dbReference>
<dbReference type="SMART" id="SM00228">
    <property type="entry name" value="PDZ"/>
    <property type="match status" value="2"/>
</dbReference>
<dbReference type="SUPFAM" id="SSF50156">
    <property type="entry name" value="PDZ domain-like"/>
    <property type="match status" value="2"/>
</dbReference>
<dbReference type="SUPFAM" id="SSF50494">
    <property type="entry name" value="Trypsin-like serine proteases"/>
    <property type="match status" value="1"/>
</dbReference>
<dbReference type="PROSITE" id="PS50106">
    <property type="entry name" value="PDZ"/>
    <property type="match status" value="2"/>
</dbReference>
<accession>Q4KGQ4</accession>
<organism>
    <name type="scientific">Pseudomonas fluorescens (strain ATCC BAA-477 / NRRL B-23932 / Pf-5)</name>
    <dbReference type="NCBI Taxonomy" id="220664"/>
    <lineage>
        <taxon>Bacteria</taxon>
        <taxon>Pseudomonadati</taxon>
        <taxon>Pseudomonadota</taxon>
        <taxon>Gammaproteobacteria</taxon>
        <taxon>Pseudomonadales</taxon>
        <taxon>Pseudomonadaceae</taxon>
        <taxon>Pseudomonas</taxon>
    </lineage>
</organism>
<feature type="signal peptide" evidence="2">
    <location>
        <begin position="1"/>
        <end position="27"/>
    </location>
</feature>
<feature type="chain" id="PRO_0000414223" description="Probable periplasmic serine endoprotease DegP-like">
    <location>
        <begin position="28"/>
        <end position="476"/>
    </location>
</feature>
<feature type="domain" description="PDZ 1" evidence="3">
    <location>
        <begin position="263"/>
        <end position="354"/>
    </location>
</feature>
<feature type="domain" description="PDZ 2" evidence="3">
    <location>
        <begin position="360"/>
        <end position="465"/>
    </location>
</feature>
<feature type="active site" description="Charge relay system" evidence="1">
    <location>
        <position position="116"/>
    </location>
</feature>
<feature type="active site" description="Charge relay system" evidence="2">
    <location>
        <position position="146"/>
    </location>
</feature>
<feature type="active site" description="Charge relay system" evidence="1">
    <location>
        <position position="219"/>
    </location>
</feature>
<feature type="binding site" evidence="1">
    <location>
        <begin position="217"/>
        <end position="219"/>
    </location>
    <ligand>
        <name>substrate</name>
    </ligand>
</feature>
<feature type="binding site" evidence="1">
    <location>
        <begin position="274"/>
        <end position="278"/>
    </location>
    <ligand>
        <name>substrate</name>
    </ligand>
</feature>
<proteinExistence type="inferred from homology"/>
<comment type="function">
    <text evidence="1">Might be efficient in the degradation of transiently denatured and unfolded proteins which accumulate in the periplasm following stress conditions.</text>
</comment>
<comment type="catalytic activity">
    <reaction>
        <text>Acts on substrates that are at least partially unfolded. The cleavage site P1 residue is normally between a pair of hydrophobic residues, such as Val-|-Val.</text>
        <dbReference type="EC" id="3.4.21.107"/>
    </reaction>
</comment>
<comment type="subcellular location">
    <subcellularLocation>
        <location evidence="4">Periplasm</location>
    </subcellularLocation>
</comment>
<comment type="similarity">
    <text evidence="4">Belongs to the peptidase S1C family.</text>
</comment>
<keyword id="KW-0378">Hydrolase</keyword>
<keyword id="KW-0574">Periplasm</keyword>
<keyword id="KW-0645">Protease</keyword>
<keyword id="KW-0677">Repeat</keyword>
<keyword id="KW-0720">Serine protease</keyword>
<keyword id="KW-0732">Signal</keyword>
<keyword id="KW-0346">Stress response</keyword>
<gene>
    <name type="primary">mucD</name>
    <name type="ordered locus">PFL_1451</name>
</gene>
<name>DEGPL_PSEF5</name>